<sequence length="947" mass="108023">MTPLSSPLSQYWQTVVERLPEGFTETSLSVQAKSVLTFSDFALDSVIAHPEWLAELESASPQADEWRHYAGWLQEALAGVCDDASLMRELRFFRRRIMVRIAWAQTLSLVDDETILQQLSHLAETLIVGARDWLYAACCREWGTPCNPQGVPQPLLILGMGKLGGGELNFSSDIDLIFAWPEHGETRGGRRELDNAQFFTRLGQRLIKALDQPTMDGFVYRVDMRLRPFGDSGPLVLSFAALEDYYQEQGRDWERYAMVKARLMGDNDDAWSRELRAMLRPFVFRRYIDFSVIQSLRNMKGMIAREVRRRGLKDNIKLGAGGIREIEFIVQVFQLIRGGREPSLQSRSLLPTLDAIAALHLLPENDVAQLRVAYLFLRRLENLLQSINDEQTQTLPADDLNRARLAWGMKAENWPQLVGELTDHMANVRRVFNELIGDDEADTPQEEERSEPWREVWQDALQEDDSTPVLAHLADEDRRQVLTLIADFRKELDKRPIGPRGRQVLDQLMPHLLADVCSREDAAVTLSRITPLLAGIVTRTTYLELLSEFPGALKHLIMLCAASPMIASQLARYPLLLDELLDPGTLYQPTATDAYRDELRQYLLRVPEEDEEQQLEALRQFKQAQLLRIAAADIAGTLPVMKVSDHLTWLAEAMIDAVVQQAWTQMVARYGQPAHLDERQGRGFAVVGYGKLGGWELGYSSDLDLIFLHDCPMDVMTNGEREIDGRQFYLRLAQRIMHLFSTRTSSGILYEVDARLRPSGAAGMLVTSADAFADYQQHEAWTWEHQALVRARVVYGDPQLTSQFDAVRRTIMTTARDGKTLQTEVREMREKMRAHLGNKHRDRFDIKADEGGITDIEFIAQYLVLRYAHEKPKLTRWSDNVRILELLAQNGIMDEHEAQALTVAYTTLRDELHHLALQELPGHVAQTCFSKERALVQASWRKWLVAV</sequence>
<organism>
    <name type="scientific">Salmonella paratyphi C (strain RKS4594)</name>
    <dbReference type="NCBI Taxonomy" id="476213"/>
    <lineage>
        <taxon>Bacteria</taxon>
        <taxon>Pseudomonadati</taxon>
        <taxon>Pseudomonadota</taxon>
        <taxon>Gammaproteobacteria</taxon>
        <taxon>Enterobacterales</taxon>
        <taxon>Enterobacteriaceae</taxon>
        <taxon>Salmonella</taxon>
    </lineage>
</organism>
<reference key="1">
    <citation type="journal article" date="2009" name="PLoS ONE">
        <title>Salmonella paratyphi C: genetic divergence from Salmonella choleraesuis and pathogenic convergence with Salmonella typhi.</title>
        <authorList>
            <person name="Liu W.-Q."/>
            <person name="Feng Y."/>
            <person name="Wang Y."/>
            <person name="Zou Q.-H."/>
            <person name="Chen F."/>
            <person name="Guo J.-T."/>
            <person name="Peng Y.-H."/>
            <person name="Jin Y."/>
            <person name="Li Y.-G."/>
            <person name="Hu S.-N."/>
            <person name="Johnston R.N."/>
            <person name="Liu G.-R."/>
            <person name="Liu S.-L."/>
        </authorList>
    </citation>
    <scope>NUCLEOTIDE SEQUENCE [LARGE SCALE GENOMIC DNA]</scope>
    <source>
        <strain>RKS4594</strain>
    </source>
</reference>
<protein>
    <recommendedName>
        <fullName evidence="1">Bifunctional glutamine synthetase adenylyltransferase/adenylyl-removing enzyme</fullName>
    </recommendedName>
    <alternativeName>
        <fullName evidence="1">ATP:glutamine synthetase adenylyltransferase</fullName>
    </alternativeName>
    <alternativeName>
        <fullName evidence="1">ATase</fullName>
    </alternativeName>
    <domain>
        <recommendedName>
            <fullName evidence="1">Glutamine synthetase adenylyl-L-tyrosine phosphorylase</fullName>
            <ecNumber evidence="1">2.7.7.89</ecNumber>
        </recommendedName>
        <alternativeName>
            <fullName evidence="1">Adenylyl removase</fullName>
            <shortName evidence="1">AR</shortName>
            <shortName evidence="1">AT-N</shortName>
        </alternativeName>
    </domain>
    <domain>
        <recommendedName>
            <fullName evidence="1">Glutamine synthetase adenylyl transferase</fullName>
            <ecNumber evidence="1">2.7.7.42</ecNumber>
        </recommendedName>
        <alternativeName>
            <fullName evidence="1">Adenylyl transferase</fullName>
            <shortName evidence="1">AT</shortName>
            <shortName evidence="1">AT-C</shortName>
        </alternativeName>
    </domain>
</protein>
<name>GLNE_SALPC</name>
<evidence type="ECO:0000255" key="1">
    <source>
        <dbReference type="HAMAP-Rule" id="MF_00802"/>
    </source>
</evidence>
<keyword id="KW-0067">ATP-binding</keyword>
<keyword id="KW-0460">Magnesium</keyword>
<keyword id="KW-0511">Multifunctional enzyme</keyword>
<keyword id="KW-0547">Nucleotide-binding</keyword>
<keyword id="KW-0548">Nucleotidyltransferase</keyword>
<keyword id="KW-0808">Transferase</keyword>
<gene>
    <name evidence="1" type="primary">glnE</name>
    <name type="ordered locus">SPC_3277</name>
</gene>
<feature type="chain" id="PRO_1000148545" description="Bifunctional glutamine synthetase adenylyltransferase/adenylyl-removing enzyme">
    <location>
        <begin position="1"/>
        <end position="947"/>
    </location>
</feature>
<feature type="region of interest" description="Adenylyl removase" evidence="1">
    <location>
        <begin position="1"/>
        <end position="440"/>
    </location>
</feature>
<feature type="region of interest" description="Adenylyl transferase" evidence="1">
    <location>
        <begin position="450"/>
        <end position="947"/>
    </location>
</feature>
<dbReference type="EC" id="2.7.7.89" evidence="1"/>
<dbReference type="EC" id="2.7.7.42" evidence="1"/>
<dbReference type="EMBL" id="CP000857">
    <property type="protein sequence ID" value="ACN47362.1"/>
    <property type="molecule type" value="Genomic_DNA"/>
</dbReference>
<dbReference type="RefSeq" id="WP_000188306.1">
    <property type="nucleotide sequence ID" value="NC_012125.1"/>
</dbReference>
<dbReference type="SMR" id="C0PYX4"/>
<dbReference type="KEGG" id="sei:SPC_3277"/>
<dbReference type="HOGENOM" id="CLU_006233_0_1_6"/>
<dbReference type="Proteomes" id="UP000001599">
    <property type="component" value="Chromosome"/>
</dbReference>
<dbReference type="GO" id="GO:0005829">
    <property type="term" value="C:cytosol"/>
    <property type="evidence" value="ECO:0007669"/>
    <property type="project" value="TreeGrafter"/>
</dbReference>
<dbReference type="GO" id="GO:0008882">
    <property type="term" value="F:[glutamate-ammonia-ligase] adenylyltransferase activity"/>
    <property type="evidence" value="ECO:0007669"/>
    <property type="project" value="UniProtKB-UniRule"/>
</dbReference>
<dbReference type="GO" id="GO:0047388">
    <property type="term" value="F:[glutamine synthetase]-adenylyl-L-tyrosine phosphorylase activity"/>
    <property type="evidence" value="ECO:0007669"/>
    <property type="project" value="UniProtKB-EC"/>
</dbReference>
<dbReference type="GO" id="GO:0005524">
    <property type="term" value="F:ATP binding"/>
    <property type="evidence" value="ECO:0007669"/>
    <property type="project" value="UniProtKB-UniRule"/>
</dbReference>
<dbReference type="GO" id="GO:0000287">
    <property type="term" value="F:magnesium ion binding"/>
    <property type="evidence" value="ECO:0007669"/>
    <property type="project" value="UniProtKB-UniRule"/>
</dbReference>
<dbReference type="GO" id="GO:0000820">
    <property type="term" value="P:regulation of glutamine family amino acid metabolic process"/>
    <property type="evidence" value="ECO:0007669"/>
    <property type="project" value="UniProtKB-UniRule"/>
</dbReference>
<dbReference type="CDD" id="cd05401">
    <property type="entry name" value="NT_GlnE_GlnD_like"/>
    <property type="match status" value="2"/>
</dbReference>
<dbReference type="FunFam" id="1.10.4050.10:FF:000001">
    <property type="entry name" value="Bifunctional glutamine synthetase adenylyltransferase/adenylyl-removing enzyme"/>
    <property type="match status" value="1"/>
</dbReference>
<dbReference type="FunFam" id="1.20.120.1510:FF:000001">
    <property type="entry name" value="Bifunctional glutamine synthetase adenylyltransferase/adenylyl-removing enzyme"/>
    <property type="match status" value="1"/>
</dbReference>
<dbReference type="FunFam" id="1.20.120.330:FF:000005">
    <property type="entry name" value="Bifunctional glutamine synthetase adenylyltransferase/adenylyl-removing enzyme"/>
    <property type="match status" value="1"/>
</dbReference>
<dbReference type="FunFam" id="1.20.120.330:FF:000008">
    <property type="entry name" value="Bifunctional glutamine synthetase adenylyltransferase/adenylyl-removing enzyme"/>
    <property type="match status" value="1"/>
</dbReference>
<dbReference type="FunFam" id="3.30.460.10:FF:000009">
    <property type="entry name" value="Bifunctional glutamine synthetase adenylyltransferase/adenylyl-removing enzyme"/>
    <property type="match status" value="1"/>
</dbReference>
<dbReference type="FunFam" id="3.30.460.10:FF:000014">
    <property type="entry name" value="Bifunctional glutamine synthetase adenylyltransferase/adenylyl-removing enzyme"/>
    <property type="match status" value="1"/>
</dbReference>
<dbReference type="Gene3D" id="1.20.120.1510">
    <property type="match status" value="1"/>
</dbReference>
<dbReference type="Gene3D" id="3.30.460.10">
    <property type="entry name" value="Beta Polymerase, domain 2"/>
    <property type="match status" value="2"/>
</dbReference>
<dbReference type="Gene3D" id="1.10.4050.10">
    <property type="entry name" value="Glutamine synthase adenylyltransferase GlnE"/>
    <property type="match status" value="1"/>
</dbReference>
<dbReference type="Gene3D" id="1.20.120.330">
    <property type="entry name" value="Nucleotidyltransferases domain 2"/>
    <property type="match status" value="2"/>
</dbReference>
<dbReference type="HAMAP" id="MF_00802">
    <property type="entry name" value="GlnE"/>
    <property type="match status" value="1"/>
</dbReference>
<dbReference type="InterPro" id="IPR023057">
    <property type="entry name" value="GlnE"/>
</dbReference>
<dbReference type="InterPro" id="IPR005190">
    <property type="entry name" value="GlnE_rpt_dom"/>
</dbReference>
<dbReference type="InterPro" id="IPR043519">
    <property type="entry name" value="NT_sf"/>
</dbReference>
<dbReference type="InterPro" id="IPR013546">
    <property type="entry name" value="PII_UdlTrfase/GS_AdlTrfase"/>
</dbReference>
<dbReference type="NCBIfam" id="NF008292">
    <property type="entry name" value="PRK11072.1"/>
    <property type="match status" value="1"/>
</dbReference>
<dbReference type="PANTHER" id="PTHR30621:SF0">
    <property type="entry name" value="BIFUNCTIONAL GLUTAMINE SYNTHETASE ADENYLYLTRANSFERASE_ADENYLYL-REMOVING ENZYME"/>
    <property type="match status" value="1"/>
</dbReference>
<dbReference type="PANTHER" id="PTHR30621">
    <property type="entry name" value="GLUTAMINE SYNTHETASE ADENYLYLTRANSFERASE"/>
    <property type="match status" value="1"/>
</dbReference>
<dbReference type="Pfam" id="PF08335">
    <property type="entry name" value="GlnD_UR_UTase"/>
    <property type="match status" value="2"/>
</dbReference>
<dbReference type="Pfam" id="PF03710">
    <property type="entry name" value="GlnE"/>
    <property type="match status" value="2"/>
</dbReference>
<dbReference type="SUPFAM" id="SSF81301">
    <property type="entry name" value="Nucleotidyltransferase"/>
    <property type="match status" value="2"/>
</dbReference>
<dbReference type="SUPFAM" id="SSF81593">
    <property type="entry name" value="Nucleotidyltransferase substrate binding subunit/domain"/>
    <property type="match status" value="2"/>
</dbReference>
<proteinExistence type="inferred from homology"/>
<comment type="function">
    <text evidence="1">Involved in the regulation of glutamine synthetase GlnA, a key enzyme in the process to assimilate ammonia. When cellular nitrogen levels are high, the C-terminal adenylyl transferase (AT) inactivates GlnA by covalent transfer of an adenylyl group from ATP to specific tyrosine residue of GlnA, thus reducing its activity. Conversely, when nitrogen levels are low, the N-terminal adenylyl removase (AR) activates GlnA by removing the adenylyl group by phosphorolysis, increasing its activity. The regulatory region of GlnE binds the signal transduction protein PII (GlnB) which indicates the nitrogen status of the cell.</text>
</comment>
<comment type="catalytic activity">
    <reaction evidence="1">
        <text>[glutamine synthetase]-O(4)-(5'-adenylyl)-L-tyrosine + phosphate = [glutamine synthetase]-L-tyrosine + ADP</text>
        <dbReference type="Rhea" id="RHEA:43716"/>
        <dbReference type="Rhea" id="RHEA-COMP:10660"/>
        <dbReference type="Rhea" id="RHEA-COMP:10661"/>
        <dbReference type="ChEBI" id="CHEBI:43474"/>
        <dbReference type="ChEBI" id="CHEBI:46858"/>
        <dbReference type="ChEBI" id="CHEBI:83624"/>
        <dbReference type="ChEBI" id="CHEBI:456216"/>
        <dbReference type="EC" id="2.7.7.89"/>
    </reaction>
</comment>
<comment type="catalytic activity">
    <reaction evidence="1">
        <text>[glutamine synthetase]-L-tyrosine + ATP = [glutamine synthetase]-O(4)-(5'-adenylyl)-L-tyrosine + diphosphate</text>
        <dbReference type="Rhea" id="RHEA:18589"/>
        <dbReference type="Rhea" id="RHEA-COMP:10660"/>
        <dbReference type="Rhea" id="RHEA-COMP:10661"/>
        <dbReference type="ChEBI" id="CHEBI:30616"/>
        <dbReference type="ChEBI" id="CHEBI:33019"/>
        <dbReference type="ChEBI" id="CHEBI:46858"/>
        <dbReference type="ChEBI" id="CHEBI:83624"/>
        <dbReference type="EC" id="2.7.7.42"/>
    </reaction>
</comment>
<comment type="cofactor">
    <cofactor evidence="1">
        <name>Mg(2+)</name>
        <dbReference type="ChEBI" id="CHEBI:18420"/>
    </cofactor>
</comment>
<comment type="similarity">
    <text evidence="1">Belongs to the GlnE family.</text>
</comment>
<accession>C0PYX4</accession>